<gene>
    <name evidence="1" type="primary">frr</name>
    <name type="ordered locus">ACL_1154</name>
</gene>
<name>RRF_ACHLI</name>
<evidence type="ECO:0000255" key="1">
    <source>
        <dbReference type="HAMAP-Rule" id="MF_00040"/>
    </source>
</evidence>
<reference key="1">
    <citation type="journal article" date="2011" name="J. Bacteriol.">
        <title>Complete genome and proteome of Acholeplasma laidlawii.</title>
        <authorList>
            <person name="Lazarev V.N."/>
            <person name="Levitskii S.A."/>
            <person name="Basovskii Y.I."/>
            <person name="Chukin M.M."/>
            <person name="Akopian T.A."/>
            <person name="Vereshchagin V.V."/>
            <person name="Kostrjukova E.S."/>
            <person name="Kovaleva G.Y."/>
            <person name="Kazanov M.D."/>
            <person name="Malko D.B."/>
            <person name="Vitreschak A.G."/>
            <person name="Sernova N.V."/>
            <person name="Gelfand M.S."/>
            <person name="Demina I.A."/>
            <person name="Serebryakova M.V."/>
            <person name="Galyamina M.A."/>
            <person name="Vtyurin N.N."/>
            <person name="Rogov S.I."/>
            <person name="Alexeev D.G."/>
            <person name="Ladygina V.G."/>
            <person name="Govorun V.M."/>
        </authorList>
    </citation>
    <scope>NUCLEOTIDE SEQUENCE [LARGE SCALE GENOMIC DNA]</scope>
    <source>
        <strain>PG-8A</strain>
    </source>
</reference>
<protein>
    <recommendedName>
        <fullName evidence="1">Ribosome-recycling factor</fullName>
        <shortName evidence="1">RRF</shortName>
    </recommendedName>
    <alternativeName>
        <fullName evidence="1">Ribosome-releasing factor</fullName>
    </alternativeName>
</protein>
<feature type="chain" id="PRO_1000074568" description="Ribosome-recycling factor">
    <location>
        <begin position="1"/>
        <end position="184"/>
    </location>
</feature>
<dbReference type="EMBL" id="CP000896">
    <property type="protein sequence ID" value="ABX81753.1"/>
    <property type="molecule type" value="Genomic_DNA"/>
</dbReference>
<dbReference type="RefSeq" id="WP_012243084.1">
    <property type="nucleotide sequence ID" value="NC_010163.1"/>
</dbReference>
<dbReference type="SMR" id="A9NHC3"/>
<dbReference type="STRING" id="441768.ACL_1154"/>
<dbReference type="GeneID" id="41339294"/>
<dbReference type="KEGG" id="acl:ACL_1154"/>
<dbReference type="eggNOG" id="COG0233">
    <property type="taxonomic scope" value="Bacteria"/>
</dbReference>
<dbReference type="HOGENOM" id="CLU_073981_2_0_14"/>
<dbReference type="OrthoDB" id="9804006at2"/>
<dbReference type="Proteomes" id="UP000008558">
    <property type="component" value="Chromosome"/>
</dbReference>
<dbReference type="GO" id="GO:0005737">
    <property type="term" value="C:cytoplasm"/>
    <property type="evidence" value="ECO:0007669"/>
    <property type="project" value="UniProtKB-SubCell"/>
</dbReference>
<dbReference type="GO" id="GO:0043023">
    <property type="term" value="F:ribosomal large subunit binding"/>
    <property type="evidence" value="ECO:0007669"/>
    <property type="project" value="TreeGrafter"/>
</dbReference>
<dbReference type="GO" id="GO:0006415">
    <property type="term" value="P:translational termination"/>
    <property type="evidence" value="ECO:0007669"/>
    <property type="project" value="UniProtKB-UniRule"/>
</dbReference>
<dbReference type="CDD" id="cd00520">
    <property type="entry name" value="RRF"/>
    <property type="match status" value="1"/>
</dbReference>
<dbReference type="FunFam" id="1.10.132.20:FF:000001">
    <property type="entry name" value="Ribosome-recycling factor"/>
    <property type="match status" value="1"/>
</dbReference>
<dbReference type="FunFam" id="3.30.1360.40:FF:000001">
    <property type="entry name" value="Ribosome-recycling factor"/>
    <property type="match status" value="1"/>
</dbReference>
<dbReference type="Gene3D" id="3.30.1360.40">
    <property type="match status" value="1"/>
</dbReference>
<dbReference type="Gene3D" id="1.10.132.20">
    <property type="entry name" value="Ribosome-recycling factor"/>
    <property type="match status" value="1"/>
</dbReference>
<dbReference type="HAMAP" id="MF_00040">
    <property type="entry name" value="RRF"/>
    <property type="match status" value="1"/>
</dbReference>
<dbReference type="InterPro" id="IPR002661">
    <property type="entry name" value="Ribosome_recyc_fac"/>
</dbReference>
<dbReference type="InterPro" id="IPR023584">
    <property type="entry name" value="Ribosome_recyc_fac_dom"/>
</dbReference>
<dbReference type="InterPro" id="IPR036191">
    <property type="entry name" value="RRF_sf"/>
</dbReference>
<dbReference type="NCBIfam" id="TIGR00496">
    <property type="entry name" value="frr"/>
    <property type="match status" value="1"/>
</dbReference>
<dbReference type="PANTHER" id="PTHR20982:SF3">
    <property type="entry name" value="MITOCHONDRIAL RIBOSOME RECYCLING FACTOR PSEUDO 1"/>
    <property type="match status" value="1"/>
</dbReference>
<dbReference type="PANTHER" id="PTHR20982">
    <property type="entry name" value="RIBOSOME RECYCLING FACTOR"/>
    <property type="match status" value="1"/>
</dbReference>
<dbReference type="Pfam" id="PF01765">
    <property type="entry name" value="RRF"/>
    <property type="match status" value="1"/>
</dbReference>
<dbReference type="SUPFAM" id="SSF55194">
    <property type="entry name" value="Ribosome recycling factor, RRF"/>
    <property type="match status" value="1"/>
</dbReference>
<keyword id="KW-0963">Cytoplasm</keyword>
<keyword id="KW-0648">Protein biosynthesis</keyword>
<keyword id="KW-1185">Reference proteome</keyword>
<organism>
    <name type="scientific">Acholeplasma laidlawii (strain PG-8A)</name>
    <dbReference type="NCBI Taxonomy" id="441768"/>
    <lineage>
        <taxon>Bacteria</taxon>
        <taxon>Bacillati</taxon>
        <taxon>Mycoplasmatota</taxon>
        <taxon>Mollicutes</taxon>
        <taxon>Acholeplasmatales</taxon>
        <taxon>Acholeplasmataceae</taxon>
        <taxon>Acholeplasma</taxon>
    </lineage>
</organism>
<sequence>MNEQADMILLEIEEKMEKSLEALGREYAAVRTGRANPNILDRIMVSYYGVDTPLKQVASISVPEAQQLYIKPFDKSILKDIETAINTSSLELPPRNDGTGIRLTLPALTGERRRSLVKDVEKMAEAGKVAIRHIRRDGNEHLKKLGLTEDDEKGYLEDVQALTDAYVKKVDELTKEKSEELLDV</sequence>
<accession>A9NHC3</accession>
<comment type="function">
    <text evidence="1">Responsible for the release of ribosomes from messenger RNA at the termination of protein biosynthesis. May increase the efficiency of translation by recycling ribosomes from one round of translation to another.</text>
</comment>
<comment type="subcellular location">
    <subcellularLocation>
        <location evidence="1">Cytoplasm</location>
    </subcellularLocation>
</comment>
<comment type="similarity">
    <text evidence="1">Belongs to the RRF family.</text>
</comment>
<proteinExistence type="inferred from homology"/>